<gene>
    <name evidence="1" type="primary">aroQ</name>
    <name type="ordered locus">Hac_1142</name>
</gene>
<keyword id="KW-0028">Amino-acid biosynthesis</keyword>
<keyword id="KW-0057">Aromatic amino acid biosynthesis</keyword>
<keyword id="KW-0456">Lyase</keyword>
<dbReference type="EC" id="4.2.1.10" evidence="1"/>
<dbReference type="EMBL" id="AM260522">
    <property type="protein sequence ID" value="CAJ99903.1"/>
    <property type="molecule type" value="Genomic_DNA"/>
</dbReference>
<dbReference type="RefSeq" id="WP_011578010.1">
    <property type="nucleotide sequence ID" value="NC_008229.1"/>
</dbReference>
<dbReference type="SMR" id="Q17WS3"/>
<dbReference type="STRING" id="382638.Hac_1142"/>
<dbReference type="GeneID" id="31758497"/>
<dbReference type="KEGG" id="hac:Hac_1142"/>
<dbReference type="eggNOG" id="COG0757">
    <property type="taxonomic scope" value="Bacteria"/>
</dbReference>
<dbReference type="HOGENOM" id="CLU_090968_1_0_7"/>
<dbReference type="OrthoDB" id="9790793at2"/>
<dbReference type="BioCyc" id="HACI382638:HAC_RS04920-MONOMER"/>
<dbReference type="UniPathway" id="UPA00053">
    <property type="reaction ID" value="UER00086"/>
</dbReference>
<dbReference type="Proteomes" id="UP000000775">
    <property type="component" value="Chromosome"/>
</dbReference>
<dbReference type="GO" id="GO:0003855">
    <property type="term" value="F:3-dehydroquinate dehydratase activity"/>
    <property type="evidence" value="ECO:0007669"/>
    <property type="project" value="UniProtKB-UniRule"/>
</dbReference>
<dbReference type="GO" id="GO:0008652">
    <property type="term" value="P:amino acid biosynthetic process"/>
    <property type="evidence" value="ECO:0007669"/>
    <property type="project" value="UniProtKB-KW"/>
</dbReference>
<dbReference type="GO" id="GO:0009073">
    <property type="term" value="P:aromatic amino acid family biosynthetic process"/>
    <property type="evidence" value="ECO:0007669"/>
    <property type="project" value="UniProtKB-KW"/>
</dbReference>
<dbReference type="GO" id="GO:0009423">
    <property type="term" value="P:chorismate biosynthetic process"/>
    <property type="evidence" value="ECO:0007669"/>
    <property type="project" value="UniProtKB-UniRule"/>
</dbReference>
<dbReference type="GO" id="GO:0019631">
    <property type="term" value="P:quinate catabolic process"/>
    <property type="evidence" value="ECO:0007669"/>
    <property type="project" value="TreeGrafter"/>
</dbReference>
<dbReference type="CDD" id="cd00466">
    <property type="entry name" value="DHQase_II"/>
    <property type="match status" value="1"/>
</dbReference>
<dbReference type="Gene3D" id="3.40.50.9100">
    <property type="entry name" value="Dehydroquinase, class II"/>
    <property type="match status" value="1"/>
</dbReference>
<dbReference type="HAMAP" id="MF_00169">
    <property type="entry name" value="AroQ"/>
    <property type="match status" value="1"/>
</dbReference>
<dbReference type="InterPro" id="IPR001874">
    <property type="entry name" value="DHquinase_II"/>
</dbReference>
<dbReference type="InterPro" id="IPR018509">
    <property type="entry name" value="DHquinase_II_CS"/>
</dbReference>
<dbReference type="InterPro" id="IPR036441">
    <property type="entry name" value="DHquinase_II_sf"/>
</dbReference>
<dbReference type="NCBIfam" id="TIGR01088">
    <property type="entry name" value="aroQ"/>
    <property type="match status" value="1"/>
</dbReference>
<dbReference type="NCBIfam" id="NF003805">
    <property type="entry name" value="PRK05395.1-2"/>
    <property type="match status" value="1"/>
</dbReference>
<dbReference type="NCBIfam" id="NF003806">
    <property type="entry name" value="PRK05395.1-3"/>
    <property type="match status" value="1"/>
</dbReference>
<dbReference type="NCBIfam" id="NF003807">
    <property type="entry name" value="PRK05395.1-4"/>
    <property type="match status" value="1"/>
</dbReference>
<dbReference type="PANTHER" id="PTHR21272">
    <property type="entry name" value="CATABOLIC 3-DEHYDROQUINASE"/>
    <property type="match status" value="1"/>
</dbReference>
<dbReference type="PANTHER" id="PTHR21272:SF3">
    <property type="entry name" value="CATABOLIC 3-DEHYDROQUINASE"/>
    <property type="match status" value="1"/>
</dbReference>
<dbReference type="Pfam" id="PF01220">
    <property type="entry name" value="DHquinase_II"/>
    <property type="match status" value="1"/>
</dbReference>
<dbReference type="PIRSF" id="PIRSF001399">
    <property type="entry name" value="DHquinase_II"/>
    <property type="match status" value="1"/>
</dbReference>
<dbReference type="SUPFAM" id="SSF52304">
    <property type="entry name" value="Type II 3-dehydroquinate dehydratase"/>
    <property type="match status" value="1"/>
</dbReference>
<dbReference type="PROSITE" id="PS01029">
    <property type="entry name" value="DEHYDROQUINASE_II"/>
    <property type="match status" value="1"/>
</dbReference>
<sequence>MKILVIQGPNLNMLGHRDPRLYGMVTLDQIHEIMQTFVKQSNLDVELEFFQTNFEGEIIDKIQESVGSDYEGIIINPGAFSHTSIAIADAIMLAGKPVIEVHLTNIQAREEFRKNSYTGAACGGVIMGFGPLGYNMALMAMVNILAEMKAFQEAQQNNPNNSINNINN</sequence>
<name>AROQ_HELAH</name>
<feature type="chain" id="PRO_1000023474" description="3-dehydroquinate dehydratase">
    <location>
        <begin position="1"/>
        <end position="168"/>
    </location>
</feature>
<feature type="active site" description="Proton acceptor" evidence="1">
    <location>
        <position position="22"/>
    </location>
</feature>
<feature type="active site" description="Proton donor" evidence="1">
    <location>
        <position position="102"/>
    </location>
</feature>
<feature type="binding site" evidence="1">
    <location>
        <position position="76"/>
    </location>
    <ligand>
        <name>substrate</name>
    </ligand>
</feature>
<feature type="binding site" evidence="1">
    <location>
        <position position="82"/>
    </location>
    <ligand>
        <name>substrate</name>
    </ligand>
</feature>
<feature type="binding site" evidence="1">
    <location>
        <position position="89"/>
    </location>
    <ligand>
        <name>substrate</name>
    </ligand>
</feature>
<feature type="binding site" evidence="1">
    <location>
        <begin position="103"/>
        <end position="104"/>
    </location>
    <ligand>
        <name>substrate</name>
    </ligand>
</feature>
<feature type="binding site" evidence="1">
    <location>
        <position position="113"/>
    </location>
    <ligand>
        <name>substrate</name>
    </ligand>
</feature>
<feature type="site" description="Transition state stabilizer" evidence="1">
    <location>
        <position position="17"/>
    </location>
</feature>
<evidence type="ECO:0000255" key="1">
    <source>
        <dbReference type="HAMAP-Rule" id="MF_00169"/>
    </source>
</evidence>
<protein>
    <recommendedName>
        <fullName evidence="1">3-dehydroquinate dehydratase</fullName>
        <shortName evidence="1">3-dehydroquinase</shortName>
        <ecNumber evidence="1">4.2.1.10</ecNumber>
    </recommendedName>
    <alternativeName>
        <fullName evidence="1">Type II DHQase</fullName>
    </alternativeName>
</protein>
<reference key="1">
    <citation type="journal article" date="2006" name="PLoS Genet.">
        <title>Who ate whom? Adaptive Helicobacter genomic changes that accompanied a host jump from early humans to large felines.</title>
        <authorList>
            <person name="Eppinger M."/>
            <person name="Baar C."/>
            <person name="Linz B."/>
            <person name="Raddatz G."/>
            <person name="Lanz C."/>
            <person name="Keller H."/>
            <person name="Morelli G."/>
            <person name="Gressmann H."/>
            <person name="Achtman M."/>
            <person name="Schuster S.C."/>
        </authorList>
    </citation>
    <scope>NUCLEOTIDE SEQUENCE [LARGE SCALE GENOMIC DNA]</scope>
    <source>
        <strain>Sheeba</strain>
    </source>
</reference>
<comment type="function">
    <text evidence="1">Catalyzes a trans-dehydration via an enolate intermediate.</text>
</comment>
<comment type="catalytic activity">
    <reaction evidence="1">
        <text>3-dehydroquinate = 3-dehydroshikimate + H2O</text>
        <dbReference type="Rhea" id="RHEA:21096"/>
        <dbReference type="ChEBI" id="CHEBI:15377"/>
        <dbReference type="ChEBI" id="CHEBI:16630"/>
        <dbReference type="ChEBI" id="CHEBI:32364"/>
        <dbReference type="EC" id="4.2.1.10"/>
    </reaction>
</comment>
<comment type="pathway">
    <text evidence="1">Metabolic intermediate biosynthesis; chorismate biosynthesis; chorismate from D-erythrose 4-phosphate and phosphoenolpyruvate: step 3/7.</text>
</comment>
<comment type="subunit">
    <text evidence="1">Homododecamer.</text>
</comment>
<comment type="similarity">
    <text evidence="1">Belongs to the type-II 3-dehydroquinase family.</text>
</comment>
<accession>Q17WS3</accession>
<organism>
    <name type="scientific">Helicobacter acinonychis (strain Sheeba)</name>
    <dbReference type="NCBI Taxonomy" id="382638"/>
    <lineage>
        <taxon>Bacteria</taxon>
        <taxon>Pseudomonadati</taxon>
        <taxon>Campylobacterota</taxon>
        <taxon>Epsilonproteobacteria</taxon>
        <taxon>Campylobacterales</taxon>
        <taxon>Helicobacteraceae</taxon>
        <taxon>Helicobacter</taxon>
    </lineage>
</organism>
<proteinExistence type="inferred from homology"/>